<reference key="1">
    <citation type="journal article" date="2007" name="J. Bacteriol.">
        <title>Complete genome sequence of Haemophilus somnus (Histophilus somni) strain 129Pt and comparison to Haemophilus ducreyi 35000HP and Haemophilus influenzae Rd.</title>
        <authorList>
            <person name="Challacombe J.F."/>
            <person name="Duncan A.J."/>
            <person name="Brettin T.S."/>
            <person name="Bruce D."/>
            <person name="Chertkov O."/>
            <person name="Detter J.C."/>
            <person name="Han C.S."/>
            <person name="Misra M."/>
            <person name="Richardson P."/>
            <person name="Tapia R."/>
            <person name="Thayer N."/>
            <person name="Xie G."/>
            <person name="Inzana T.J."/>
        </authorList>
    </citation>
    <scope>NUCLEOTIDE SEQUENCE [LARGE SCALE GENOMIC DNA]</scope>
    <source>
        <strain>129Pt</strain>
    </source>
</reference>
<protein>
    <recommendedName>
        <fullName evidence="1">tRNA pseudouridine synthase D</fullName>
        <ecNumber evidence="1">5.4.99.27</ecNumber>
    </recommendedName>
    <alternativeName>
        <fullName evidence="1">tRNA pseudouridine(13) synthase</fullName>
    </alternativeName>
    <alternativeName>
        <fullName evidence="1">tRNA pseudouridylate synthase D</fullName>
    </alternativeName>
    <alternativeName>
        <fullName evidence="1">tRNA-uridine isomerase D</fullName>
    </alternativeName>
</protein>
<sequence>MNELTYLQTMPKQTALLKTHCADFVVKEQLGYEMSGDGEFVAVKVRKTDCNTLFVAEKLAHFAGIPAKNMGYAGLKDRKAITEQWFCLQMPGQPTPDFNQFQLDGVEILEVTRHNRKIRTGSLDGNHFEILLREAQENADLKVRLENIKKNGFPNYFTEQRFGRDGHNLTQALRWAKGEINVKDRKKRSFYLSAARSEIFNLIVSARIRQGLHHKILVNDILQLSGSHSWFHADQKEDFNLLQQRLAQQDIQITAPLIGENVQIASDVENEIIAKHQELLYLMHQEKMKSARRPILMQAQHLSWSFIPEGLKLTFYLPAGSYATALVRELVNINE</sequence>
<comment type="function">
    <text evidence="1">Responsible for synthesis of pseudouridine from uracil-13 in transfer RNAs.</text>
</comment>
<comment type="catalytic activity">
    <reaction evidence="1">
        <text>uridine(13) in tRNA = pseudouridine(13) in tRNA</text>
        <dbReference type="Rhea" id="RHEA:42540"/>
        <dbReference type="Rhea" id="RHEA-COMP:10105"/>
        <dbReference type="Rhea" id="RHEA-COMP:10106"/>
        <dbReference type="ChEBI" id="CHEBI:65314"/>
        <dbReference type="ChEBI" id="CHEBI:65315"/>
        <dbReference type="EC" id="5.4.99.27"/>
    </reaction>
</comment>
<comment type="similarity">
    <text evidence="1">Belongs to the pseudouridine synthase TruD family.</text>
</comment>
<feature type="chain" id="PRO_1000084743" description="tRNA pseudouridine synthase D">
    <location>
        <begin position="1"/>
        <end position="335"/>
    </location>
</feature>
<feature type="domain" description="TRUD" evidence="1">
    <location>
        <begin position="152"/>
        <end position="308"/>
    </location>
</feature>
<feature type="active site" description="Nucleophile" evidence="1">
    <location>
        <position position="77"/>
    </location>
</feature>
<evidence type="ECO:0000255" key="1">
    <source>
        <dbReference type="HAMAP-Rule" id="MF_01082"/>
    </source>
</evidence>
<gene>
    <name evidence="1" type="primary">truD</name>
    <name type="ordered locus">HS_1499</name>
</gene>
<keyword id="KW-0413">Isomerase</keyword>
<keyword id="KW-0819">tRNA processing</keyword>
<dbReference type="EC" id="5.4.99.27" evidence="1"/>
<dbReference type="EMBL" id="CP000436">
    <property type="protein sequence ID" value="ABI25772.1"/>
    <property type="molecule type" value="Genomic_DNA"/>
</dbReference>
<dbReference type="SMR" id="Q0I5H8"/>
<dbReference type="KEGG" id="hso:HS_1499"/>
<dbReference type="eggNOG" id="COG0585">
    <property type="taxonomic scope" value="Bacteria"/>
</dbReference>
<dbReference type="HOGENOM" id="CLU_005281_4_0_6"/>
<dbReference type="GO" id="GO:0005829">
    <property type="term" value="C:cytosol"/>
    <property type="evidence" value="ECO:0007669"/>
    <property type="project" value="TreeGrafter"/>
</dbReference>
<dbReference type="GO" id="GO:0003723">
    <property type="term" value="F:RNA binding"/>
    <property type="evidence" value="ECO:0007669"/>
    <property type="project" value="InterPro"/>
</dbReference>
<dbReference type="GO" id="GO:0160150">
    <property type="term" value="F:tRNA pseudouridine(13) synthase activity"/>
    <property type="evidence" value="ECO:0007669"/>
    <property type="project" value="UniProtKB-EC"/>
</dbReference>
<dbReference type="GO" id="GO:0031119">
    <property type="term" value="P:tRNA pseudouridine synthesis"/>
    <property type="evidence" value="ECO:0007669"/>
    <property type="project" value="UniProtKB-UniRule"/>
</dbReference>
<dbReference type="CDD" id="cd02575">
    <property type="entry name" value="PseudoU_synth_EcTruD"/>
    <property type="match status" value="1"/>
</dbReference>
<dbReference type="Gene3D" id="3.30.2350.20">
    <property type="entry name" value="TruD, catalytic domain"/>
    <property type="match status" value="1"/>
</dbReference>
<dbReference type="Gene3D" id="3.30.2340.10">
    <property type="entry name" value="TruD, insertion domain"/>
    <property type="match status" value="1"/>
</dbReference>
<dbReference type="HAMAP" id="MF_01082">
    <property type="entry name" value="TruD"/>
    <property type="match status" value="1"/>
</dbReference>
<dbReference type="InterPro" id="IPR020103">
    <property type="entry name" value="PsdUridine_synth_cat_dom_sf"/>
</dbReference>
<dbReference type="InterPro" id="IPR001656">
    <property type="entry name" value="PsdUridine_synth_TruD"/>
</dbReference>
<dbReference type="InterPro" id="IPR020119">
    <property type="entry name" value="PsdUridine_synth_TruD_CS"/>
</dbReference>
<dbReference type="InterPro" id="IPR011760">
    <property type="entry name" value="PsdUridine_synth_TruD_insert"/>
</dbReference>
<dbReference type="InterPro" id="IPR042214">
    <property type="entry name" value="TruD_catalytic"/>
</dbReference>
<dbReference type="InterPro" id="IPR043165">
    <property type="entry name" value="TruD_insert_sf"/>
</dbReference>
<dbReference type="InterPro" id="IPR050170">
    <property type="entry name" value="TruD_pseudoU_synthase"/>
</dbReference>
<dbReference type="NCBIfam" id="NF002155">
    <property type="entry name" value="PRK00984.1-4"/>
    <property type="match status" value="1"/>
</dbReference>
<dbReference type="NCBIfam" id="TIGR00094">
    <property type="entry name" value="tRNA_TruD_broad"/>
    <property type="match status" value="1"/>
</dbReference>
<dbReference type="PANTHER" id="PTHR47811">
    <property type="entry name" value="TRNA PSEUDOURIDINE SYNTHASE D"/>
    <property type="match status" value="1"/>
</dbReference>
<dbReference type="PANTHER" id="PTHR47811:SF1">
    <property type="entry name" value="TRNA PSEUDOURIDINE SYNTHASE D"/>
    <property type="match status" value="1"/>
</dbReference>
<dbReference type="Pfam" id="PF01142">
    <property type="entry name" value="TruD"/>
    <property type="match status" value="2"/>
</dbReference>
<dbReference type="SUPFAM" id="SSF55120">
    <property type="entry name" value="Pseudouridine synthase"/>
    <property type="match status" value="1"/>
</dbReference>
<dbReference type="PROSITE" id="PS50984">
    <property type="entry name" value="TRUD"/>
    <property type="match status" value="1"/>
</dbReference>
<dbReference type="PROSITE" id="PS01268">
    <property type="entry name" value="UPF0024"/>
    <property type="match status" value="1"/>
</dbReference>
<accession>Q0I5H8</accession>
<proteinExistence type="inferred from homology"/>
<name>TRUD_HISS1</name>
<organism>
    <name type="scientific">Histophilus somni (strain 129Pt)</name>
    <name type="common">Haemophilus somnus</name>
    <dbReference type="NCBI Taxonomy" id="205914"/>
    <lineage>
        <taxon>Bacteria</taxon>
        <taxon>Pseudomonadati</taxon>
        <taxon>Pseudomonadota</taxon>
        <taxon>Gammaproteobacteria</taxon>
        <taxon>Pasteurellales</taxon>
        <taxon>Pasteurellaceae</taxon>
        <taxon>Histophilus</taxon>
    </lineage>
</organism>